<accession>Q6L2Z8</accession>
<name>GLGE_PICTO</name>
<sequence>MDPVAIENVTPEIECGRFPAKIVVNSKFTVTAEVFRAGHDLVYPVLMYRKLKKRWRSVAMKGTGNDLYEASFTPDEPGIYEYKISAWKDSYGTLIRNINAWLGSNEDVEQDLIEAINLIKDAYKRSSGNDKKIIKRYLDDLINSDLNKKVMILNDNNFSSIIKKYQKKIDKTDYRTLRLIADPEYGGYGSWYELFPRSIGNFNDIIKHLNYVKSMNFNVLYLTPIHPIGITNRRGKNGSRISDKNDPGSPWAIGNDSGGHYSINSDLGSLEDFKNLLRSAREKNIMIAMDIALQCSPDHPYVRDHPEWFYHRPDGSIRYAENPPKKYYDIYPLNFETKNKMALWNEMKNIFLYWISNGVKIFRVDNPHTKPLDFWEWLINDIKRDHPDVVFLSEAFTRENLMFELSKRGFTMSYTYFTWKLTKGEITEYFKKLYSYPYNFFFRPMLFTNTPDILGRDLSMGRNEFIIRSVLASTLSSLWGIYSGFELCENDRLDDTEEYLNSEKYEIKRRNFNSDNNIKDIIARLNSIRDEMPALRSGKIKFCETDNDKIIAYARYNNENKILVVLNLDTMNVQSGFIRVPLNDFSMDLNSIYDVHDVLNNNHYKWSGEYNYVRLIPGKRQAHIMVIKNA</sequence>
<evidence type="ECO:0000255" key="1">
    <source>
        <dbReference type="HAMAP-Rule" id="MF_02124"/>
    </source>
</evidence>
<dbReference type="EC" id="2.4.99.16" evidence="1"/>
<dbReference type="EMBL" id="AE017261">
    <property type="protein sequence ID" value="AAT42653.1"/>
    <property type="molecule type" value="Genomic_DNA"/>
</dbReference>
<dbReference type="RefSeq" id="WP_011176869.1">
    <property type="nucleotide sequence ID" value="NC_005877.1"/>
</dbReference>
<dbReference type="SMR" id="Q6L2Z8"/>
<dbReference type="STRING" id="263820.PTO0068"/>
<dbReference type="CAZy" id="GH13">
    <property type="family name" value="Glycoside Hydrolase Family 13"/>
</dbReference>
<dbReference type="PaxDb" id="263820-PTO0068"/>
<dbReference type="GeneID" id="2845000"/>
<dbReference type="KEGG" id="pto:PTO0068"/>
<dbReference type="PATRIC" id="fig|263820.9.peg.81"/>
<dbReference type="eggNOG" id="arCOG02948">
    <property type="taxonomic scope" value="Archaea"/>
</dbReference>
<dbReference type="HOGENOM" id="CLU_015798_0_0_2"/>
<dbReference type="InParanoid" id="Q6L2Z8"/>
<dbReference type="OrthoDB" id="34423at2157"/>
<dbReference type="Proteomes" id="UP000000438">
    <property type="component" value="Chromosome"/>
</dbReference>
<dbReference type="GO" id="GO:0016758">
    <property type="term" value="F:hexosyltransferase activity"/>
    <property type="evidence" value="ECO:0007669"/>
    <property type="project" value="UniProtKB-UniRule"/>
</dbReference>
<dbReference type="GO" id="GO:0004553">
    <property type="term" value="F:hydrolase activity, hydrolyzing O-glycosyl compounds"/>
    <property type="evidence" value="ECO:0007669"/>
    <property type="project" value="InterPro"/>
</dbReference>
<dbReference type="GO" id="GO:0030979">
    <property type="term" value="P:alpha-glucan biosynthetic process"/>
    <property type="evidence" value="ECO:0007669"/>
    <property type="project" value="UniProtKB-UniRule"/>
</dbReference>
<dbReference type="CDD" id="cd11344">
    <property type="entry name" value="AmyAc_GlgE_like"/>
    <property type="match status" value="1"/>
</dbReference>
<dbReference type="Gene3D" id="3.20.20.80">
    <property type="entry name" value="Glycosidases"/>
    <property type="match status" value="1"/>
</dbReference>
<dbReference type="Gene3D" id="2.60.40.1180">
    <property type="entry name" value="Golgi alpha-mannosidase II"/>
    <property type="match status" value="1"/>
</dbReference>
<dbReference type="Gene3D" id="2.60.40.10">
    <property type="entry name" value="Immunoglobulins"/>
    <property type="match status" value="1"/>
</dbReference>
<dbReference type="Gene3D" id="1.20.58.80">
    <property type="entry name" value="Phosphotransferase system, lactose/cellobiose-type IIA subunit"/>
    <property type="match status" value="1"/>
</dbReference>
<dbReference type="HAMAP" id="MF_02124">
    <property type="entry name" value="GlgE"/>
    <property type="match status" value="1"/>
</dbReference>
<dbReference type="InterPro" id="IPR026585">
    <property type="entry name" value="GlgE"/>
</dbReference>
<dbReference type="InterPro" id="IPR049171">
    <property type="entry name" value="GLGE_C"/>
</dbReference>
<dbReference type="InterPro" id="IPR021828">
    <property type="entry name" value="GlgE_dom_N/S"/>
</dbReference>
<dbReference type="InterPro" id="IPR006047">
    <property type="entry name" value="Glyco_hydro_13_cat_dom"/>
</dbReference>
<dbReference type="InterPro" id="IPR013780">
    <property type="entry name" value="Glyco_hydro_b"/>
</dbReference>
<dbReference type="InterPro" id="IPR017853">
    <property type="entry name" value="Glycoside_hydrolase_SF"/>
</dbReference>
<dbReference type="InterPro" id="IPR013783">
    <property type="entry name" value="Ig-like_fold"/>
</dbReference>
<dbReference type="PANTHER" id="PTHR47786">
    <property type="entry name" value="ALPHA-1,4-GLUCAN:MALTOSE-1-PHOSPHATE MALTOSYLTRANSFERASE"/>
    <property type="match status" value="1"/>
</dbReference>
<dbReference type="PANTHER" id="PTHR47786:SF2">
    <property type="entry name" value="GLYCOSYL HYDROLASE FAMILY 13 CATALYTIC DOMAIN-CONTAINING PROTEIN"/>
    <property type="match status" value="1"/>
</dbReference>
<dbReference type="Pfam" id="PF00128">
    <property type="entry name" value="Alpha-amylase"/>
    <property type="match status" value="1"/>
</dbReference>
<dbReference type="Pfam" id="PF21702">
    <property type="entry name" value="GLGE_C"/>
    <property type="match status" value="1"/>
</dbReference>
<dbReference type="Pfam" id="PF11896">
    <property type="entry name" value="GlgE_dom_N_S"/>
    <property type="match status" value="1"/>
</dbReference>
<dbReference type="SMART" id="SM00642">
    <property type="entry name" value="Aamy"/>
    <property type="match status" value="1"/>
</dbReference>
<dbReference type="SUPFAM" id="SSF51445">
    <property type="entry name" value="(Trans)glycosidases"/>
    <property type="match status" value="1"/>
</dbReference>
<dbReference type="SUPFAM" id="SSF51011">
    <property type="entry name" value="Glycosyl hydrolase domain"/>
    <property type="match status" value="1"/>
</dbReference>
<proteinExistence type="inferred from homology"/>
<organism>
    <name type="scientific">Picrophilus torridus (strain ATCC 700027 / DSM 9790 / JCM 10055 / NBRC 100828 / KAW 2/3)</name>
    <dbReference type="NCBI Taxonomy" id="1122961"/>
    <lineage>
        <taxon>Archaea</taxon>
        <taxon>Methanobacteriati</taxon>
        <taxon>Thermoplasmatota</taxon>
        <taxon>Thermoplasmata</taxon>
        <taxon>Thermoplasmatales</taxon>
        <taxon>Picrophilaceae</taxon>
        <taxon>Picrophilus</taxon>
    </lineage>
</organism>
<comment type="function">
    <text evidence="1">Maltosyltransferase that uses maltose 1-phosphate (M1P) as the sugar donor to elongate linear or branched alpha-(1-&gt;4)-glucans. Is involved in a branched alpha-glucan biosynthetic pathway from trehalose, together with TreS, Mak and GlgB.</text>
</comment>
<comment type="catalytic activity">
    <reaction evidence="1">
        <text>alpha-maltose 1-phosphate + [(1-&gt;4)-alpha-D-glucosyl](n) = [(1-&gt;4)-alpha-D-glucosyl](n+2) + phosphate</text>
        <dbReference type="Rhea" id="RHEA:42692"/>
        <dbReference type="Rhea" id="RHEA-COMP:9584"/>
        <dbReference type="Rhea" id="RHEA-COMP:10183"/>
        <dbReference type="ChEBI" id="CHEBI:15444"/>
        <dbReference type="ChEBI" id="CHEBI:43474"/>
        <dbReference type="ChEBI" id="CHEBI:63576"/>
        <dbReference type="EC" id="2.4.99.16"/>
    </reaction>
</comment>
<comment type="subunit">
    <text evidence="1">Homodimer.</text>
</comment>
<comment type="similarity">
    <text evidence="1">Belongs to the glycosyl hydrolase 13 family. GlgE subfamily.</text>
</comment>
<gene>
    <name evidence="1" type="primary">glgE</name>
    <name type="ordered locus">PTO0068</name>
</gene>
<keyword id="KW-0119">Carbohydrate metabolism</keyword>
<keyword id="KW-0328">Glycosyltransferase</keyword>
<keyword id="KW-0808">Transferase</keyword>
<feature type="chain" id="PRO_0000413899" description="Alpha-1,4-glucan:maltose-1-phosphate maltosyltransferase">
    <location>
        <begin position="1"/>
        <end position="630"/>
    </location>
</feature>
<feature type="active site" description="Nucleophile" evidence="1">
    <location>
        <position position="365"/>
    </location>
</feature>
<feature type="active site" description="Proton donor" evidence="1">
    <location>
        <position position="394"/>
    </location>
</feature>
<feature type="binding site" evidence="1">
    <location>
        <position position="234"/>
    </location>
    <ligand>
        <name>alpha-maltose 1-phosphate</name>
        <dbReference type="ChEBI" id="CHEBI:63576"/>
    </ligand>
</feature>
<feature type="binding site" evidence="1">
    <location>
        <position position="294"/>
    </location>
    <ligand>
        <name>alpha-maltose 1-phosphate</name>
        <dbReference type="ChEBI" id="CHEBI:63576"/>
    </ligand>
</feature>
<feature type="binding site" evidence="1">
    <location>
        <position position="329"/>
    </location>
    <ligand>
        <name>alpha-maltose 1-phosphate</name>
        <dbReference type="ChEBI" id="CHEBI:63576"/>
    </ligand>
</feature>
<feature type="binding site" evidence="1">
    <location>
        <position position="366"/>
    </location>
    <ligand>
        <name>alpha-maltose 1-phosphate</name>
        <dbReference type="ChEBI" id="CHEBI:63576"/>
    </ligand>
</feature>
<feature type="binding site" evidence="1">
    <location>
        <begin position="504"/>
        <end position="505"/>
    </location>
    <ligand>
        <name>alpha-maltose 1-phosphate</name>
        <dbReference type="ChEBI" id="CHEBI:63576"/>
    </ligand>
</feature>
<feature type="site" description="Transition state stabilizer" evidence="1">
    <location>
        <position position="452"/>
    </location>
</feature>
<reference key="1">
    <citation type="journal article" date="2004" name="Proc. Natl. Acad. Sci. U.S.A.">
        <title>Genome sequence of Picrophilus torridus and its implications for life around pH 0.</title>
        <authorList>
            <person name="Fuetterer O."/>
            <person name="Angelov A."/>
            <person name="Liesegang H."/>
            <person name="Gottschalk G."/>
            <person name="Schleper C."/>
            <person name="Schepers B."/>
            <person name="Dock C."/>
            <person name="Antranikian G."/>
            <person name="Liebl W."/>
        </authorList>
    </citation>
    <scope>NUCLEOTIDE SEQUENCE [LARGE SCALE GENOMIC DNA]</scope>
    <source>
        <strain>ATCC 700027 / DSM 9790 / JCM 10055 / NBRC 100828 / KAW 2/3</strain>
    </source>
</reference>
<protein>
    <recommendedName>
        <fullName evidence="1">Alpha-1,4-glucan:maltose-1-phosphate maltosyltransferase</fullName>
        <shortName evidence="1">GMPMT</shortName>
        <ecNumber evidence="1">2.4.99.16</ecNumber>
    </recommendedName>
    <alternativeName>
        <fullName evidence="1">(1-&gt;4)-alpha-D-glucan:maltose-1-phosphate alpha-D-maltosyltransferase</fullName>
    </alternativeName>
</protein>